<keyword id="KW-0012">Acyltransferase</keyword>
<keyword id="KW-0028">Amino-acid biosynthesis</keyword>
<keyword id="KW-0055">Arginine biosynthesis</keyword>
<keyword id="KW-0068">Autocatalytic cleavage</keyword>
<keyword id="KW-0963">Cytoplasm</keyword>
<keyword id="KW-0511">Multifunctional enzyme</keyword>
<keyword id="KW-1185">Reference proteome</keyword>
<keyword id="KW-0808">Transferase</keyword>
<gene>
    <name evidence="1" type="primary">argJ</name>
    <name type="ordered locus">PSPTO_4399</name>
</gene>
<accession>Q87WZ4</accession>
<organism>
    <name type="scientific">Pseudomonas syringae pv. tomato (strain ATCC BAA-871 / DC3000)</name>
    <dbReference type="NCBI Taxonomy" id="223283"/>
    <lineage>
        <taxon>Bacteria</taxon>
        <taxon>Pseudomonadati</taxon>
        <taxon>Pseudomonadota</taxon>
        <taxon>Gammaproteobacteria</taxon>
        <taxon>Pseudomonadales</taxon>
        <taxon>Pseudomonadaceae</taxon>
        <taxon>Pseudomonas</taxon>
    </lineage>
</organism>
<dbReference type="EC" id="2.3.1.35" evidence="1"/>
<dbReference type="EC" id="2.3.1.1" evidence="1"/>
<dbReference type="EMBL" id="AE016853">
    <property type="protein sequence ID" value="AAO57848.1"/>
    <property type="molecule type" value="Genomic_DNA"/>
</dbReference>
<dbReference type="RefSeq" id="NP_794153.1">
    <property type="nucleotide sequence ID" value="NC_004578.1"/>
</dbReference>
<dbReference type="RefSeq" id="WP_011105001.1">
    <property type="nucleotide sequence ID" value="NC_004578.1"/>
</dbReference>
<dbReference type="SMR" id="Q87WZ4"/>
<dbReference type="STRING" id="223283.PSPTO_4399"/>
<dbReference type="MEROPS" id="T05.001"/>
<dbReference type="GeneID" id="1186080"/>
<dbReference type="KEGG" id="pst:PSPTO_4399"/>
<dbReference type="PATRIC" id="fig|223283.9.peg.4514"/>
<dbReference type="eggNOG" id="COG1364">
    <property type="taxonomic scope" value="Bacteria"/>
</dbReference>
<dbReference type="HOGENOM" id="CLU_027172_1_0_6"/>
<dbReference type="OrthoDB" id="9804242at2"/>
<dbReference type="PhylomeDB" id="Q87WZ4"/>
<dbReference type="UniPathway" id="UPA00068">
    <property type="reaction ID" value="UER00106"/>
</dbReference>
<dbReference type="UniPathway" id="UPA00068">
    <property type="reaction ID" value="UER00111"/>
</dbReference>
<dbReference type="Proteomes" id="UP000002515">
    <property type="component" value="Chromosome"/>
</dbReference>
<dbReference type="GO" id="GO:0005737">
    <property type="term" value="C:cytoplasm"/>
    <property type="evidence" value="ECO:0007669"/>
    <property type="project" value="UniProtKB-SubCell"/>
</dbReference>
<dbReference type="GO" id="GO:0004358">
    <property type="term" value="F:glutamate N-acetyltransferase activity"/>
    <property type="evidence" value="ECO:0007669"/>
    <property type="project" value="UniProtKB-UniRule"/>
</dbReference>
<dbReference type="GO" id="GO:0004042">
    <property type="term" value="F:L-glutamate N-acetyltransferase activity"/>
    <property type="evidence" value="ECO:0007669"/>
    <property type="project" value="UniProtKB-UniRule"/>
</dbReference>
<dbReference type="GO" id="GO:0006526">
    <property type="term" value="P:L-arginine biosynthetic process"/>
    <property type="evidence" value="ECO:0007669"/>
    <property type="project" value="UniProtKB-UniRule"/>
</dbReference>
<dbReference type="GO" id="GO:0006592">
    <property type="term" value="P:ornithine biosynthetic process"/>
    <property type="evidence" value="ECO:0007669"/>
    <property type="project" value="TreeGrafter"/>
</dbReference>
<dbReference type="CDD" id="cd02152">
    <property type="entry name" value="OAT"/>
    <property type="match status" value="1"/>
</dbReference>
<dbReference type="FunFam" id="3.10.20.340:FF:000001">
    <property type="entry name" value="Arginine biosynthesis bifunctional protein ArgJ, chloroplastic"/>
    <property type="match status" value="1"/>
</dbReference>
<dbReference type="FunFam" id="3.60.70.12:FF:000001">
    <property type="entry name" value="Arginine biosynthesis bifunctional protein ArgJ, chloroplastic"/>
    <property type="match status" value="1"/>
</dbReference>
<dbReference type="Gene3D" id="3.10.20.340">
    <property type="entry name" value="ArgJ beta chain, C-terminal domain"/>
    <property type="match status" value="1"/>
</dbReference>
<dbReference type="Gene3D" id="3.60.70.12">
    <property type="entry name" value="L-amino peptidase D-ALA esterase/amidase"/>
    <property type="match status" value="1"/>
</dbReference>
<dbReference type="HAMAP" id="MF_01106">
    <property type="entry name" value="ArgJ"/>
    <property type="match status" value="1"/>
</dbReference>
<dbReference type="InterPro" id="IPR002813">
    <property type="entry name" value="Arg_biosynth_ArgJ"/>
</dbReference>
<dbReference type="InterPro" id="IPR016117">
    <property type="entry name" value="ArgJ-like_dom_sf"/>
</dbReference>
<dbReference type="InterPro" id="IPR042195">
    <property type="entry name" value="ArgJ_beta_C"/>
</dbReference>
<dbReference type="NCBIfam" id="TIGR00120">
    <property type="entry name" value="ArgJ"/>
    <property type="match status" value="1"/>
</dbReference>
<dbReference type="NCBIfam" id="NF003802">
    <property type="entry name" value="PRK05388.1"/>
    <property type="match status" value="1"/>
</dbReference>
<dbReference type="PANTHER" id="PTHR23100">
    <property type="entry name" value="ARGININE BIOSYNTHESIS BIFUNCTIONAL PROTEIN ARGJ"/>
    <property type="match status" value="1"/>
</dbReference>
<dbReference type="PANTHER" id="PTHR23100:SF0">
    <property type="entry name" value="ARGININE BIOSYNTHESIS BIFUNCTIONAL PROTEIN ARGJ, MITOCHONDRIAL"/>
    <property type="match status" value="1"/>
</dbReference>
<dbReference type="Pfam" id="PF01960">
    <property type="entry name" value="ArgJ"/>
    <property type="match status" value="1"/>
</dbReference>
<dbReference type="SUPFAM" id="SSF56266">
    <property type="entry name" value="DmpA/ArgJ-like"/>
    <property type="match status" value="1"/>
</dbReference>
<feature type="chain" id="PRO_0000002217" description="Arginine biosynthesis bifunctional protein ArgJ alpha chain" evidence="1">
    <location>
        <begin position="1"/>
        <end position="188"/>
    </location>
</feature>
<feature type="chain" id="PRO_0000002218" description="Arginine biosynthesis bifunctional protein ArgJ beta chain" evidence="1">
    <location>
        <begin position="189"/>
        <end position="405"/>
    </location>
</feature>
<feature type="active site" description="Nucleophile" evidence="1">
    <location>
        <position position="189"/>
    </location>
</feature>
<feature type="binding site" evidence="1">
    <location>
        <position position="152"/>
    </location>
    <ligand>
        <name>substrate</name>
    </ligand>
</feature>
<feature type="binding site" evidence="1">
    <location>
        <position position="178"/>
    </location>
    <ligand>
        <name>substrate</name>
    </ligand>
</feature>
<feature type="binding site" evidence="1">
    <location>
        <position position="189"/>
    </location>
    <ligand>
        <name>substrate</name>
    </ligand>
</feature>
<feature type="binding site" evidence="1">
    <location>
        <position position="276"/>
    </location>
    <ligand>
        <name>substrate</name>
    </ligand>
</feature>
<feature type="binding site" evidence="1">
    <location>
        <position position="400"/>
    </location>
    <ligand>
        <name>substrate</name>
    </ligand>
</feature>
<feature type="binding site" evidence="1">
    <location>
        <position position="405"/>
    </location>
    <ligand>
        <name>substrate</name>
    </ligand>
</feature>
<feature type="site" description="Involved in the stabilization of negative charge on the oxyanion by the formation of the oxyanion hole" evidence="1">
    <location>
        <position position="115"/>
    </location>
</feature>
<feature type="site" description="Involved in the stabilization of negative charge on the oxyanion by the formation of the oxyanion hole" evidence="1">
    <location>
        <position position="116"/>
    </location>
</feature>
<feature type="site" description="Cleavage; by autolysis" evidence="1">
    <location>
        <begin position="188"/>
        <end position="189"/>
    </location>
</feature>
<proteinExistence type="inferred from homology"/>
<reference key="1">
    <citation type="journal article" date="2003" name="Proc. Natl. Acad. Sci. U.S.A.">
        <title>The complete genome sequence of the Arabidopsis and tomato pathogen Pseudomonas syringae pv. tomato DC3000.</title>
        <authorList>
            <person name="Buell C.R."/>
            <person name="Joardar V."/>
            <person name="Lindeberg M."/>
            <person name="Selengut J."/>
            <person name="Paulsen I.T."/>
            <person name="Gwinn M.L."/>
            <person name="Dodson R.J."/>
            <person name="DeBoy R.T."/>
            <person name="Durkin A.S."/>
            <person name="Kolonay J.F."/>
            <person name="Madupu R."/>
            <person name="Daugherty S.C."/>
            <person name="Brinkac L.M."/>
            <person name="Beanan M.J."/>
            <person name="Haft D.H."/>
            <person name="Nelson W.C."/>
            <person name="Davidsen T.M."/>
            <person name="Zafar N."/>
            <person name="Zhou L."/>
            <person name="Liu J."/>
            <person name="Yuan Q."/>
            <person name="Khouri H.M."/>
            <person name="Fedorova N.B."/>
            <person name="Tran B."/>
            <person name="Russell D."/>
            <person name="Berry K.J."/>
            <person name="Utterback T.R."/>
            <person name="Van Aken S.E."/>
            <person name="Feldblyum T.V."/>
            <person name="D'Ascenzo M."/>
            <person name="Deng W.-L."/>
            <person name="Ramos A.R."/>
            <person name="Alfano J.R."/>
            <person name="Cartinhour S."/>
            <person name="Chatterjee A.K."/>
            <person name="Delaney T.P."/>
            <person name="Lazarowitz S.G."/>
            <person name="Martin G.B."/>
            <person name="Schneider D.J."/>
            <person name="Tang X."/>
            <person name="Bender C.L."/>
            <person name="White O."/>
            <person name="Fraser C.M."/>
            <person name="Collmer A."/>
        </authorList>
    </citation>
    <scope>NUCLEOTIDE SEQUENCE [LARGE SCALE GENOMIC DNA]</scope>
    <source>
        <strain>ATCC BAA-871 / DC3000</strain>
    </source>
</reference>
<protein>
    <recommendedName>
        <fullName evidence="1">Arginine biosynthesis bifunctional protein ArgJ</fullName>
    </recommendedName>
    <domain>
        <recommendedName>
            <fullName evidence="1">Glutamate N-acetyltransferase</fullName>
            <ecNumber evidence="1">2.3.1.35</ecNumber>
        </recommendedName>
        <alternativeName>
            <fullName evidence="1">Ornithine acetyltransferase</fullName>
            <shortName evidence="1">OATase</shortName>
        </alternativeName>
        <alternativeName>
            <fullName evidence="1">Ornithine transacetylase</fullName>
        </alternativeName>
    </domain>
    <domain>
        <recommendedName>
            <fullName evidence="1">Amino-acid acetyltransferase</fullName>
            <ecNumber evidence="1">2.3.1.1</ecNumber>
        </recommendedName>
        <alternativeName>
            <fullName evidence="1">N-acetylglutamate synthase</fullName>
            <shortName evidence="1">AGSase</shortName>
        </alternativeName>
    </domain>
    <component>
        <recommendedName>
            <fullName evidence="1">Arginine biosynthesis bifunctional protein ArgJ alpha chain</fullName>
        </recommendedName>
    </component>
    <component>
        <recommendedName>
            <fullName evidence="1">Arginine biosynthesis bifunctional protein ArgJ beta chain</fullName>
        </recommendedName>
    </component>
</protein>
<evidence type="ECO:0000255" key="1">
    <source>
        <dbReference type="HAMAP-Rule" id="MF_01106"/>
    </source>
</evidence>
<sequence>MAVGLGPLPALHPVPGFELGISSAGIKRPGRKDVVVMRCAEGSSVAGVFTLNAFCAAPVILAKQRVQGTVRYLLTNTGNANAGTGEPGLVAARRTCEALAQLTGVDASAVLPYSTGVIGEPLPVEKIEGALQAALDDLSVDNWAAAATGIMTTDTLPKGASRQFTHDGVTITVTGISKGAGMIRPNMATMLGYIATDAKVSQSVLQDLIRDGANKSFNRLTIDGDTSTNDCCMLIATGQADLPEITEAKGLLFEALKKAVFDVCMEVAQAIVRDGEGATKFVTVEVNGGGNHQECLDVGYAVAHSPLIKTALFASDPNWGRILAAVGRAGVPDLDVSKIDVFLGGVCIASQGCRATTYTEEQGSAVMAEAEITIRIELGRGDCSETIWTTDLSHEYVKINAEYRT</sequence>
<name>ARGJ_PSESM</name>
<comment type="function">
    <text evidence="1">Catalyzes two activities which are involved in the cyclic version of arginine biosynthesis: the synthesis of N-acetylglutamate from glutamate and acetyl-CoA as the acetyl donor, and of ornithine by transacetylation between N(2)-acetylornithine and glutamate.</text>
</comment>
<comment type="catalytic activity">
    <reaction evidence="1">
        <text>N(2)-acetyl-L-ornithine + L-glutamate = N-acetyl-L-glutamate + L-ornithine</text>
        <dbReference type="Rhea" id="RHEA:15349"/>
        <dbReference type="ChEBI" id="CHEBI:29985"/>
        <dbReference type="ChEBI" id="CHEBI:44337"/>
        <dbReference type="ChEBI" id="CHEBI:46911"/>
        <dbReference type="ChEBI" id="CHEBI:57805"/>
        <dbReference type="EC" id="2.3.1.35"/>
    </reaction>
</comment>
<comment type="catalytic activity">
    <reaction evidence="1">
        <text>L-glutamate + acetyl-CoA = N-acetyl-L-glutamate + CoA + H(+)</text>
        <dbReference type="Rhea" id="RHEA:24292"/>
        <dbReference type="ChEBI" id="CHEBI:15378"/>
        <dbReference type="ChEBI" id="CHEBI:29985"/>
        <dbReference type="ChEBI" id="CHEBI:44337"/>
        <dbReference type="ChEBI" id="CHEBI:57287"/>
        <dbReference type="ChEBI" id="CHEBI:57288"/>
        <dbReference type="EC" id="2.3.1.1"/>
    </reaction>
</comment>
<comment type="pathway">
    <text evidence="1">Amino-acid biosynthesis; L-arginine biosynthesis; L-ornithine and N-acetyl-L-glutamate from L-glutamate and N(2)-acetyl-L-ornithine (cyclic): step 1/1.</text>
</comment>
<comment type="pathway">
    <text evidence="1">Amino-acid biosynthesis; L-arginine biosynthesis; N(2)-acetyl-L-ornithine from L-glutamate: step 1/4.</text>
</comment>
<comment type="subunit">
    <text evidence="1">Heterotetramer of two alpha and two beta chains.</text>
</comment>
<comment type="subcellular location">
    <subcellularLocation>
        <location evidence="1">Cytoplasm</location>
    </subcellularLocation>
</comment>
<comment type="similarity">
    <text evidence="1">Belongs to the ArgJ family.</text>
</comment>